<comment type="function">
    <text evidence="1">Presumably involved in the processing and regular turnover of intracellular proteins. Catalyzes the removal of unsubstituted N-terminal amino acids from various peptides.</text>
</comment>
<comment type="catalytic activity">
    <reaction evidence="1">
        <text>Release of an N-terminal amino acid, Xaa-|-Yaa-, in which Xaa is preferably Leu, but may be other amino acids including Pro although not Arg or Lys, and Yaa may be Pro. Amino acid amides and methyl esters are also readily hydrolyzed, but rates on arylamides are exceedingly low.</text>
        <dbReference type="EC" id="3.4.11.1"/>
    </reaction>
</comment>
<comment type="catalytic activity">
    <reaction evidence="1">
        <text>Release of an N-terminal amino acid, preferentially leucine, but not glutamic or aspartic acids.</text>
        <dbReference type="EC" id="3.4.11.10"/>
    </reaction>
</comment>
<comment type="cofactor">
    <cofactor evidence="1">
        <name>Mn(2+)</name>
        <dbReference type="ChEBI" id="CHEBI:29035"/>
    </cofactor>
    <text evidence="1">Binds 2 manganese ions per subunit.</text>
</comment>
<comment type="subcellular location">
    <subcellularLocation>
        <location evidence="1">Cytoplasm</location>
    </subcellularLocation>
</comment>
<comment type="similarity">
    <text evidence="1">Belongs to the peptidase M17 family.</text>
</comment>
<proteinExistence type="inferred from homology"/>
<name>AMPA_PROMS</name>
<feature type="chain" id="PRO_1000019952" description="Probable cytosol aminopeptidase">
    <location>
        <begin position="1"/>
        <end position="490"/>
    </location>
</feature>
<feature type="active site" evidence="1">
    <location>
        <position position="269"/>
    </location>
</feature>
<feature type="active site" evidence="1">
    <location>
        <position position="345"/>
    </location>
</feature>
<feature type="binding site" evidence="1">
    <location>
        <position position="257"/>
    </location>
    <ligand>
        <name>Mn(2+)</name>
        <dbReference type="ChEBI" id="CHEBI:29035"/>
        <label>2</label>
    </ligand>
</feature>
<feature type="binding site" evidence="1">
    <location>
        <position position="262"/>
    </location>
    <ligand>
        <name>Mn(2+)</name>
        <dbReference type="ChEBI" id="CHEBI:29035"/>
        <label>1</label>
    </ligand>
</feature>
<feature type="binding site" evidence="1">
    <location>
        <position position="262"/>
    </location>
    <ligand>
        <name>Mn(2+)</name>
        <dbReference type="ChEBI" id="CHEBI:29035"/>
        <label>2</label>
    </ligand>
</feature>
<feature type="binding site" evidence="1">
    <location>
        <position position="281"/>
    </location>
    <ligand>
        <name>Mn(2+)</name>
        <dbReference type="ChEBI" id="CHEBI:29035"/>
        <label>2</label>
    </ligand>
</feature>
<feature type="binding site" evidence="1">
    <location>
        <position position="341"/>
    </location>
    <ligand>
        <name>Mn(2+)</name>
        <dbReference type="ChEBI" id="CHEBI:29035"/>
        <label>1</label>
    </ligand>
</feature>
<feature type="binding site" evidence="1">
    <location>
        <position position="343"/>
    </location>
    <ligand>
        <name>Mn(2+)</name>
        <dbReference type="ChEBI" id="CHEBI:29035"/>
        <label>1</label>
    </ligand>
</feature>
<feature type="binding site" evidence="1">
    <location>
        <position position="343"/>
    </location>
    <ligand>
        <name>Mn(2+)</name>
        <dbReference type="ChEBI" id="CHEBI:29035"/>
        <label>2</label>
    </ligand>
</feature>
<dbReference type="EC" id="3.4.11.1" evidence="1"/>
<dbReference type="EC" id="3.4.11.10" evidence="1"/>
<dbReference type="EMBL" id="CP000551">
    <property type="protein sequence ID" value="ABM70815.1"/>
    <property type="molecule type" value="Genomic_DNA"/>
</dbReference>
<dbReference type="RefSeq" id="WP_011818947.1">
    <property type="nucleotide sequence ID" value="NC_008816.1"/>
</dbReference>
<dbReference type="SMR" id="A2BSQ4"/>
<dbReference type="STRING" id="146891.A9601_15321"/>
<dbReference type="MEROPS" id="M17.A01"/>
<dbReference type="KEGG" id="pmb:A9601_15321"/>
<dbReference type="eggNOG" id="COG0260">
    <property type="taxonomic scope" value="Bacteria"/>
</dbReference>
<dbReference type="HOGENOM" id="CLU_013734_5_1_3"/>
<dbReference type="OrthoDB" id="9809354at2"/>
<dbReference type="Proteomes" id="UP000002590">
    <property type="component" value="Chromosome"/>
</dbReference>
<dbReference type="GO" id="GO:0005737">
    <property type="term" value="C:cytoplasm"/>
    <property type="evidence" value="ECO:0007669"/>
    <property type="project" value="UniProtKB-SubCell"/>
</dbReference>
<dbReference type="GO" id="GO:0030145">
    <property type="term" value="F:manganese ion binding"/>
    <property type="evidence" value="ECO:0007669"/>
    <property type="project" value="UniProtKB-UniRule"/>
</dbReference>
<dbReference type="GO" id="GO:0070006">
    <property type="term" value="F:metalloaminopeptidase activity"/>
    <property type="evidence" value="ECO:0007669"/>
    <property type="project" value="InterPro"/>
</dbReference>
<dbReference type="GO" id="GO:0006508">
    <property type="term" value="P:proteolysis"/>
    <property type="evidence" value="ECO:0007669"/>
    <property type="project" value="UniProtKB-KW"/>
</dbReference>
<dbReference type="CDD" id="cd00433">
    <property type="entry name" value="Peptidase_M17"/>
    <property type="match status" value="1"/>
</dbReference>
<dbReference type="Gene3D" id="3.40.220.10">
    <property type="entry name" value="Leucine Aminopeptidase, subunit E, domain 1"/>
    <property type="match status" value="1"/>
</dbReference>
<dbReference type="Gene3D" id="3.40.630.10">
    <property type="entry name" value="Zn peptidases"/>
    <property type="match status" value="1"/>
</dbReference>
<dbReference type="HAMAP" id="MF_00181">
    <property type="entry name" value="Cytosol_peptidase_M17"/>
    <property type="match status" value="1"/>
</dbReference>
<dbReference type="InterPro" id="IPR011356">
    <property type="entry name" value="Leucine_aapep/pepB"/>
</dbReference>
<dbReference type="InterPro" id="IPR043472">
    <property type="entry name" value="Macro_dom-like"/>
</dbReference>
<dbReference type="InterPro" id="IPR000819">
    <property type="entry name" value="Peptidase_M17_C"/>
</dbReference>
<dbReference type="InterPro" id="IPR023042">
    <property type="entry name" value="Peptidase_M17_leu_NH2_pept"/>
</dbReference>
<dbReference type="InterPro" id="IPR008283">
    <property type="entry name" value="Peptidase_M17_N"/>
</dbReference>
<dbReference type="NCBIfam" id="NF002074">
    <property type="entry name" value="PRK00913.1-4"/>
    <property type="match status" value="1"/>
</dbReference>
<dbReference type="NCBIfam" id="NF002076">
    <property type="entry name" value="PRK00913.2-3"/>
    <property type="match status" value="1"/>
</dbReference>
<dbReference type="PANTHER" id="PTHR11963:SF23">
    <property type="entry name" value="CYTOSOL AMINOPEPTIDASE"/>
    <property type="match status" value="1"/>
</dbReference>
<dbReference type="PANTHER" id="PTHR11963">
    <property type="entry name" value="LEUCINE AMINOPEPTIDASE-RELATED"/>
    <property type="match status" value="1"/>
</dbReference>
<dbReference type="Pfam" id="PF00883">
    <property type="entry name" value="Peptidase_M17"/>
    <property type="match status" value="1"/>
</dbReference>
<dbReference type="Pfam" id="PF02789">
    <property type="entry name" value="Peptidase_M17_N"/>
    <property type="match status" value="1"/>
</dbReference>
<dbReference type="PRINTS" id="PR00481">
    <property type="entry name" value="LAMNOPPTDASE"/>
</dbReference>
<dbReference type="SUPFAM" id="SSF52949">
    <property type="entry name" value="Macro domain-like"/>
    <property type="match status" value="1"/>
</dbReference>
<dbReference type="SUPFAM" id="SSF53187">
    <property type="entry name" value="Zn-dependent exopeptidases"/>
    <property type="match status" value="1"/>
</dbReference>
<dbReference type="PROSITE" id="PS00631">
    <property type="entry name" value="CYTOSOL_AP"/>
    <property type="match status" value="1"/>
</dbReference>
<protein>
    <recommendedName>
        <fullName evidence="1">Probable cytosol aminopeptidase</fullName>
        <ecNumber evidence="1">3.4.11.1</ecNumber>
    </recommendedName>
    <alternativeName>
        <fullName evidence="1">Leucine aminopeptidase</fullName>
        <shortName evidence="1">LAP</shortName>
        <ecNumber evidence="1">3.4.11.10</ecNumber>
    </alternativeName>
    <alternativeName>
        <fullName evidence="1">Leucyl aminopeptidase</fullName>
    </alternativeName>
</protein>
<keyword id="KW-0031">Aminopeptidase</keyword>
<keyword id="KW-0963">Cytoplasm</keyword>
<keyword id="KW-0378">Hydrolase</keyword>
<keyword id="KW-0464">Manganese</keyword>
<keyword id="KW-0479">Metal-binding</keyword>
<keyword id="KW-0645">Protease</keyword>
<organism>
    <name type="scientific">Prochlorococcus marinus (strain AS9601)</name>
    <dbReference type="NCBI Taxonomy" id="146891"/>
    <lineage>
        <taxon>Bacteria</taxon>
        <taxon>Bacillati</taxon>
        <taxon>Cyanobacteriota</taxon>
        <taxon>Cyanophyceae</taxon>
        <taxon>Synechococcales</taxon>
        <taxon>Prochlorococcaceae</taxon>
        <taxon>Prochlorococcus</taxon>
    </lineage>
</organism>
<accession>A2BSQ4</accession>
<evidence type="ECO:0000255" key="1">
    <source>
        <dbReference type="HAMAP-Rule" id="MF_00181"/>
    </source>
</evidence>
<sequence>MQFSTFQTNLDNWQGASLIFGVLEEEIASQLENIKFVVDPKLLLKKVTQKKFKGEKGKTLSFEFLDQKLETLIIVGLGKSKDLNKSDIENSIGNLVRKTVDKNAKISILLPWELINSQLEITKLAESARLSAYKDNRFNKKKDEKKVLKEIEFLNLKQFENISFEETAQICEGVELARKLVAAPPNSLTPQEMSLQASKIAKDHGLEVKILEAKDCEDLEMGAYLAVAKGSDLDPKFIHLTLKSEGPIKEKIALVGKGLTFDSGGYNLKVGASQIEMMKYDMGGSAAVLGAAKALGAIKPKGLEIHFIVAACENMINGSAVHPGDVVKASNGKTIEINNTDAEGRLTLADALTYASNLNPDSIIDLATLTGAIVVALGNDVAGFWSNNDDLANDLKAASAQSGEKLWQMPLQKSYKEGLKSHIADMKNTGPRAGGSITAALFLEEFFDSEIKWAHIDIAGTCWTDKNKGINPSGATGFGVKTLVQWIKNK</sequence>
<reference key="1">
    <citation type="journal article" date="2007" name="PLoS Genet.">
        <title>Patterns and implications of gene gain and loss in the evolution of Prochlorococcus.</title>
        <authorList>
            <person name="Kettler G.C."/>
            <person name="Martiny A.C."/>
            <person name="Huang K."/>
            <person name="Zucker J."/>
            <person name="Coleman M.L."/>
            <person name="Rodrigue S."/>
            <person name="Chen F."/>
            <person name="Lapidus A."/>
            <person name="Ferriera S."/>
            <person name="Johnson J."/>
            <person name="Steglich C."/>
            <person name="Church G.M."/>
            <person name="Richardson P."/>
            <person name="Chisholm S.W."/>
        </authorList>
    </citation>
    <scope>NUCLEOTIDE SEQUENCE [LARGE SCALE GENOMIC DNA]</scope>
    <source>
        <strain>AS9601</strain>
    </source>
</reference>
<gene>
    <name evidence="1" type="primary">pepA</name>
    <name type="ordered locus">A9601_15321</name>
</gene>